<dbReference type="EC" id="2.7.1.23" evidence="1"/>
<dbReference type="EMBL" id="BX571661">
    <property type="protein sequence ID" value="CAE10655.1"/>
    <property type="molecule type" value="Genomic_DNA"/>
</dbReference>
<dbReference type="RefSeq" id="WP_011139439.1">
    <property type="nucleotide sequence ID" value="NC_005090.1"/>
</dbReference>
<dbReference type="SMR" id="Q7MR67"/>
<dbReference type="STRING" id="273121.WS1623"/>
<dbReference type="KEGG" id="wsu:WS1623"/>
<dbReference type="eggNOG" id="COG0061">
    <property type="taxonomic scope" value="Bacteria"/>
</dbReference>
<dbReference type="HOGENOM" id="CLU_008831_0_3_7"/>
<dbReference type="Proteomes" id="UP000000422">
    <property type="component" value="Chromosome"/>
</dbReference>
<dbReference type="GO" id="GO:0005737">
    <property type="term" value="C:cytoplasm"/>
    <property type="evidence" value="ECO:0007669"/>
    <property type="project" value="UniProtKB-SubCell"/>
</dbReference>
<dbReference type="GO" id="GO:0005524">
    <property type="term" value="F:ATP binding"/>
    <property type="evidence" value="ECO:0007669"/>
    <property type="project" value="UniProtKB-KW"/>
</dbReference>
<dbReference type="GO" id="GO:0046872">
    <property type="term" value="F:metal ion binding"/>
    <property type="evidence" value="ECO:0007669"/>
    <property type="project" value="UniProtKB-UniRule"/>
</dbReference>
<dbReference type="GO" id="GO:0051287">
    <property type="term" value="F:NAD binding"/>
    <property type="evidence" value="ECO:0007669"/>
    <property type="project" value="UniProtKB-ARBA"/>
</dbReference>
<dbReference type="GO" id="GO:0003951">
    <property type="term" value="F:NAD+ kinase activity"/>
    <property type="evidence" value="ECO:0007669"/>
    <property type="project" value="UniProtKB-UniRule"/>
</dbReference>
<dbReference type="GO" id="GO:0019674">
    <property type="term" value="P:NAD metabolic process"/>
    <property type="evidence" value="ECO:0007669"/>
    <property type="project" value="InterPro"/>
</dbReference>
<dbReference type="GO" id="GO:0006741">
    <property type="term" value="P:NADP biosynthetic process"/>
    <property type="evidence" value="ECO:0007669"/>
    <property type="project" value="UniProtKB-UniRule"/>
</dbReference>
<dbReference type="Gene3D" id="3.40.50.10330">
    <property type="entry name" value="Probable inorganic polyphosphate/atp-NAD kinase, domain 1"/>
    <property type="match status" value="1"/>
</dbReference>
<dbReference type="Gene3D" id="2.60.200.30">
    <property type="entry name" value="Probable inorganic polyphosphate/atp-NAD kinase, domain 2"/>
    <property type="match status" value="1"/>
</dbReference>
<dbReference type="HAMAP" id="MF_00361">
    <property type="entry name" value="NAD_kinase"/>
    <property type="match status" value="1"/>
</dbReference>
<dbReference type="InterPro" id="IPR017438">
    <property type="entry name" value="ATP-NAD_kinase_N"/>
</dbReference>
<dbReference type="InterPro" id="IPR017437">
    <property type="entry name" value="ATP-NAD_kinase_PpnK-typ_C"/>
</dbReference>
<dbReference type="InterPro" id="IPR016064">
    <property type="entry name" value="NAD/diacylglycerol_kinase_sf"/>
</dbReference>
<dbReference type="InterPro" id="IPR002504">
    <property type="entry name" value="NADK"/>
</dbReference>
<dbReference type="PANTHER" id="PTHR20275">
    <property type="entry name" value="NAD KINASE"/>
    <property type="match status" value="1"/>
</dbReference>
<dbReference type="PANTHER" id="PTHR20275:SF0">
    <property type="entry name" value="NAD KINASE"/>
    <property type="match status" value="1"/>
</dbReference>
<dbReference type="Pfam" id="PF01513">
    <property type="entry name" value="NAD_kinase"/>
    <property type="match status" value="1"/>
</dbReference>
<dbReference type="Pfam" id="PF20143">
    <property type="entry name" value="NAD_kinase_C"/>
    <property type="match status" value="1"/>
</dbReference>
<dbReference type="SUPFAM" id="SSF111331">
    <property type="entry name" value="NAD kinase/diacylglycerol kinase-like"/>
    <property type="match status" value="1"/>
</dbReference>
<proteinExistence type="inferred from homology"/>
<name>NADK_WOLSU</name>
<keyword id="KW-0067">ATP-binding</keyword>
<keyword id="KW-0963">Cytoplasm</keyword>
<keyword id="KW-0418">Kinase</keyword>
<keyword id="KW-0520">NAD</keyword>
<keyword id="KW-0521">NADP</keyword>
<keyword id="KW-0547">Nucleotide-binding</keyword>
<keyword id="KW-1185">Reference proteome</keyword>
<keyword id="KW-0808">Transferase</keyword>
<organism>
    <name type="scientific">Wolinella succinogenes (strain ATCC 29543 / DSM 1740 / CCUG 13145 / JCM 31913 / LMG 7466 / NCTC 11488 / FDC 602W)</name>
    <name type="common">Vibrio succinogenes</name>
    <dbReference type="NCBI Taxonomy" id="273121"/>
    <lineage>
        <taxon>Bacteria</taxon>
        <taxon>Pseudomonadati</taxon>
        <taxon>Campylobacterota</taxon>
        <taxon>Epsilonproteobacteria</taxon>
        <taxon>Campylobacterales</taxon>
        <taxon>Helicobacteraceae</taxon>
        <taxon>Wolinella</taxon>
    </lineage>
</organism>
<reference key="1">
    <citation type="journal article" date="2003" name="Proc. Natl. Acad. Sci. U.S.A.">
        <title>Complete genome sequence and analysis of Wolinella succinogenes.</title>
        <authorList>
            <person name="Baar C."/>
            <person name="Eppinger M."/>
            <person name="Raddatz G."/>
            <person name="Simon J."/>
            <person name="Lanz C."/>
            <person name="Klimmek O."/>
            <person name="Nandakumar R."/>
            <person name="Gross R."/>
            <person name="Rosinus A."/>
            <person name="Keller H."/>
            <person name="Jagtap P."/>
            <person name="Linke B."/>
            <person name="Meyer F."/>
            <person name="Lederer H."/>
            <person name="Schuster S.C."/>
        </authorList>
    </citation>
    <scope>NUCLEOTIDE SEQUENCE [LARGE SCALE GENOMIC DNA]</scope>
    <source>
        <strain>ATCC 29543 / DSM 1740 / CCUG 13145 / JCM 31913 / LMG 7466 / NCTC 11488 / FDC 602W</strain>
    </source>
</reference>
<gene>
    <name evidence="1" type="primary">nadK</name>
    <name type="ordered locus">WS1623</name>
</gene>
<accession>Q7MR67</accession>
<protein>
    <recommendedName>
        <fullName evidence="1">NAD kinase</fullName>
        <ecNumber evidence="1">2.7.1.23</ecNumber>
    </recommendedName>
    <alternativeName>
        <fullName evidence="1">ATP-dependent NAD kinase</fullName>
    </alternativeName>
</protein>
<sequence>MILMQPLSSLSKVGVILRPSSPSLKEFFLQVRSLFEREGIEVMLDSISGGMIGIYGCDFQRLCSESDMLVSIGGDGTLISVVRRSYPYGKPILGINMGRLGFLTDVRQDEVEAFVQKLKAGEYRIDSRLMLEGELSSPKGTQRFFAFNEAIVTRRPISGMIHVKASIGEEPFNTYFGDGLIVATPTGSTAYNISAGGPVVYPYSKNMILTPICAHSLTQRPLVLPSEFEVELEMLEGEFANIVVDGQEIMDFGYGDRLRLKVAERPALLVHKKEHNYFQVLREKFSWGDA</sequence>
<feature type="chain" id="PRO_0000229711" description="NAD kinase">
    <location>
        <begin position="1"/>
        <end position="290"/>
    </location>
</feature>
<feature type="active site" description="Proton acceptor" evidence="1">
    <location>
        <position position="75"/>
    </location>
</feature>
<feature type="binding site" evidence="1">
    <location>
        <begin position="75"/>
        <end position="76"/>
    </location>
    <ligand>
        <name>NAD(+)</name>
        <dbReference type="ChEBI" id="CHEBI:57540"/>
    </ligand>
</feature>
<feature type="binding site" evidence="1">
    <location>
        <begin position="148"/>
        <end position="149"/>
    </location>
    <ligand>
        <name>NAD(+)</name>
        <dbReference type="ChEBI" id="CHEBI:57540"/>
    </ligand>
</feature>
<feature type="binding site" evidence="1">
    <location>
        <position position="178"/>
    </location>
    <ligand>
        <name>NAD(+)</name>
        <dbReference type="ChEBI" id="CHEBI:57540"/>
    </ligand>
</feature>
<feature type="binding site" evidence="1">
    <location>
        <begin position="189"/>
        <end position="194"/>
    </location>
    <ligand>
        <name>NAD(+)</name>
        <dbReference type="ChEBI" id="CHEBI:57540"/>
    </ligand>
</feature>
<feature type="binding site" evidence="1">
    <location>
        <position position="247"/>
    </location>
    <ligand>
        <name>NAD(+)</name>
        <dbReference type="ChEBI" id="CHEBI:57540"/>
    </ligand>
</feature>
<comment type="function">
    <text evidence="1">Involved in the regulation of the intracellular balance of NAD and NADP, and is a key enzyme in the biosynthesis of NADP. Catalyzes specifically the phosphorylation on 2'-hydroxyl of the adenosine moiety of NAD to yield NADP.</text>
</comment>
<comment type="catalytic activity">
    <reaction evidence="1">
        <text>NAD(+) + ATP = ADP + NADP(+) + H(+)</text>
        <dbReference type="Rhea" id="RHEA:18629"/>
        <dbReference type="ChEBI" id="CHEBI:15378"/>
        <dbReference type="ChEBI" id="CHEBI:30616"/>
        <dbReference type="ChEBI" id="CHEBI:57540"/>
        <dbReference type="ChEBI" id="CHEBI:58349"/>
        <dbReference type="ChEBI" id="CHEBI:456216"/>
        <dbReference type="EC" id="2.7.1.23"/>
    </reaction>
</comment>
<comment type="cofactor">
    <cofactor evidence="1">
        <name>a divalent metal cation</name>
        <dbReference type="ChEBI" id="CHEBI:60240"/>
    </cofactor>
</comment>
<comment type="subcellular location">
    <subcellularLocation>
        <location evidence="1">Cytoplasm</location>
    </subcellularLocation>
</comment>
<comment type="similarity">
    <text evidence="1">Belongs to the NAD kinase family.</text>
</comment>
<evidence type="ECO:0000255" key="1">
    <source>
        <dbReference type="HAMAP-Rule" id="MF_00361"/>
    </source>
</evidence>